<proteinExistence type="evidence at transcript level"/>
<name>EGGS_FASHE</name>
<sequence length="197" mass="22470">MKFHLVLLLAIVPLTLARHPHGKFNRHASYDDREKHRGYRKENDYLNYDLKGKFSRTRQAYLHGSFDKYGNENERGRYDDQGKYSLAGKSAHDGKYGMYGNMYAKGDFKAYGNEDEGAKFEEVTTFRRGGGYDSYGKKKSYDDYDTKGHLKKFANKGRQSKFDMYGNVKADGQAISNGNMNATVCLTPMANTISMAK</sequence>
<reference key="1">
    <citation type="journal article" date="1987" name="Proc. Natl. Acad. Sci. U.S.A.">
        <title>Cloning and characterization of a female genital complex cDNA from the liver fluke Fasciola hepatica.</title>
        <authorList>
            <person name="Zurita M."/>
            <person name="Bieber D."/>
            <person name="Ringold G."/>
            <person name="Mansour T.E."/>
        </authorList>
    </citation>
    <scope>NUCLEOTIDE SEQUENCE [MRNA]</scope>
</reference>
<keyword id="KW-0732">Signal</keyword>
<dbReference type="EMBL" id="M15871">
    <property type="protein sequence ID" value="AAA29138.1"/>
    <property type="molecule type" value="mRNA"/>
</dbReference>
<dbReference type="InterPro" id="IPR012615">
    <property type="entry name" value="TES"/>
</dbReference>
<dbReference type="Pfam" id="PF08034">
    <property type="entry name" value="TES"/>
    <property type="match status" value="1"/>
</dbReference>
<feature type="signal peptide">
    <location>
        <begin position="1"/>
        <end position="17"/>
    </location>
</feature>
<feature type="chain" id="PRO_0000021155" description="Putative eggshell protein">
    <location>
        <begin position="18"/>
        <end position="197"/>
    </location>
</feature>
<organism>
    <name type="scientific">Fasciola hepatica</name>
    <name type="common">Liver fluke</name>
    <dbReference type="NCBI Taxonomy" id="6192"/>
    <lineage>
        <taxon>Eukaryota</taxon>
        <taxon>Metazoa</taxon>
        <taxon>Spiralia</taxon>
        <taxon>Lophotrochozoa</taxon>
        <taxon>Platyhelminthes</taxon>
        <taxon>Trematoda</taxon>
        <taxon>Digenea</taxon>
        <taxon>Plagiorchiida</taxon>
        <taxon>Echinostomata</taxon>
        <taxon>Echinostomatoidea</taxon>
        <taxon>Fasciolidae</taxon>
        <taxon>Fasciola</taxon>
    </lineage>
</organism>
<protein>
    <recommendedName>
        <fullName>Putative eggshell protein</fullName>
    </recommendedName>
</protein>
<accession>P07915</accession>